<evidence type="ECO:0000255" key="1">
    <source>
        <dbReference type="HAMAP-Rule" id="MF_00173"/>
    </source>
</evidence>
<dbReference type="EMBL" id="CP000891">
    <property type="protein sequence ID" value="ABX50970.1"/>
    <property type="molecule type" value="Genomic_DNA"/>
</dbReference>
<dbReference type="RefSeq" id="WP_006080175.1">
    <property type="nucleotide sequence ID" value="NC_009997.1"/>
</dbReference>
<dbReference type="SMR" id="A9L341"/>
<dbReference type="GeneID" id="11773825"/>
<dbReference type="KEGG" id="sbn:Sbal195_3810"/>
<dbReference type="HOGENOM" id="CLU_097103_2_0_6"/>
<dbReference type="UniPathway" id="UPA00068"/>
<dbReference type="Proteomes" id="UP000000770">
    <property type="component" value="Chromosome"/>
</dbReference>
<dbReference type="GO" id="GO:0005737">
    <property type="term" value="C:cytoplasm"/>
    <property type="evidence" value="ECO:0007669"/>
    <property type="project" value="UniProtKB-SubCell"/>
</dbReference>
<dbReference type="GO" id="GO:0034618">
    <property type="term" value="F:arginine binding"/>
    <property type="evidence" value="ECO:0007669"/>
    <property type="project" value="InterPro"/>
</dbReference>
<dbReference type="GO" id="GO:0003677">
    <property type="term" value="F:DNA binding"/>
    <property type="evidence" value="ECO:0007669"/>
    <property type="project" value="UniProtKB-KW"/>
</dbReference>
<dbReference type="GO" id="GO:0003700">
    <property type="term" value="F:DNA-binding transcription factor activity"/>
    <property type="evidence" value="ECO:0007669"/>
    <property type="project" value="UniProtKB-UniRule"/>
</dbReference>
<dbReference type="GO" id="GO:0006526">
    <property type="term" value="P:L-arginine biosynthetic process"/>
    <property type="evidence" value="ECO:0007669"/>
    <property type="project" value="UniProtKB-UniPathway"/>
</dbReference>
<dbReference type="GO" id="GO:0051259">
    <property type="term" value="P:protein complex oligomerization"/>
    <property type="evidence" value="ECO:0007669"/>
    <property type="project" value="InterPro"/>
</dbReference>
<dbReference type="GO" id="GO:1900079">
    <property type="term" value="P:regulation of arginine biosynthetic process"/>
    <property type="evidence" value="ECO:0007669"/>
    <property type="project" value="UniProtKB-UniRule"/>
</dbReference>
<dbReference type="Gene3D" id="3.30.1360.40">
    <property type="match status" value="1"/>
</dbReference>
<dbReference type="Gene3D" id="1.10.10.10">
    <property type="entry name" value="Winged helix-like DNA-binding domain superfamily/Winged helix DNA-binding domain"/>
    <property type="match status" value="1"/>
</dbReference>
<dbReference type="HAMAP" id="MF_00173">
    <property type="entry name" value="Arg_repressor"/>
    <property type="match status" value="1"/>
</dbReference>
<dbReference type="InterPro" id="IPR001669">
    <property type="entry name" value="Arg_repress"/>
</dbReference>
<dbReference type="InterPro" id="IPR020899">
    <property type="entry name" value="Arg_repress_C"/>
</dbReference>
<dbReference type="InterPro" id="IPR036251">
    <property type="entry name" value="Arg_repress_C_sf"/>
</dbReference>
<dbReference type="InterPro" id="IPR020900">
    <property type="entry name" value="Arg_repress_DNA-bd"/>
</dbReference>
<dbReference type="InterPro" id="IPR036388">
    <property type="entry name" value="WH-like_DNA-bd_sf"/>
</dbReference>
<dbReference type="InterPro" id="IPR036390">
    <property type="entry name" value="WH_DNA-bd_sf"/>
</dbReference>
<dbReference type="NCBIfam" id="TIGR01529">
    <property type="entry name" value="argR_whole"/>
    <property type="match status" value="1"/>
</dbReference>
<dbReference type="NCBIfam" id="NF003457">
    <property type="entry name" value="PRK05066.1"/>
    <property type="match status" value="1"/>
</dbReference>
<dbReference type="PANTHER" id="PTHR34471">
    <property type="entry name" value="ARGININE REPRESSOR"/>
    <property type="match status" value="1"/>
</dbReference>
<dbReference type="PANTHER" id="PTHR34471:SF1">
    <property type="entry name" value="ARGININE REPRESSOR"/>
    <property type="match status" value="1"/>
</dbReference>
<dbReference type="Pfam" id="PF01316">
    <property type="entry name" value="Arg_repressor"/>
    <property type="match status" value="1"/>
</dbReference>
<dbReference type="Pfam" id="PF02863">
    <property type="entry name" value="Arg_repressor_C"/>
    <property type="match status" value="1"/>
</dbReference>
<dbReference type="PRINTS" id="PR01467">
    <property type="entry name" value="ARGREPRESSOR"/>
</dbReference>
<dbReference type="SUPFAM" id="SSF55252">
    <property type="entry name" value="C-terminal domain of arginine repressor"/>
    <property type="match status" value="1"/>
</dbReference>
<dbReference type="SUPFAM" id="SSF46785">
    <property type="entry name" value="Winged helix' DNA-binding domain"/>
    <property type="match status" value="1"/>
</dbReference>
<feature type="chain" id="PRO_1000077132" description="Arginine repressor">
    <location>
        <begin position="1"/>
        <end position="156"/>
    </location>
</feature>
<comment type="function">
    <text evidence="1">Regulates arginine biosynthesis genes.</text>
</comment>
<comment type="pathway">
    <text>Amino-acid biosynthesis; L-arginine biosynthesis [regulation].</text>
</comment>
<comment type="subcellular location">
    <subcellularLocation>
        <location evidence="1">Cytoplasm</location>
    </subcellularLocation>
</comment>
<comment type="similarity">
    <text evidence="1">Belongs to the ArgR family.</text>
</comment>
<accession>A9L341</accession>
<proteinExistence type="inferred from homology"/>
<organism>
    <name type="scientific">Shewanella baltica (strain OS195)</name>
    <dbReference type="NCBI Taxonomy" id="399599"/>
    <lineage>
        <taxon>Bacteria</taxon>
        <taxon>Pseudomonadati</taxon>
        <taxon>Pseudomonadota</taxon>
        <taxon>Gammaproteobacteria</taxon>
        <taxon>Alteromonadales</taxon>
        <taxon>Shewanellaceae</taxon>
        <taxon>Shewanella</taxon>
    </lineage>
</organism>
<keyword id="KW-0028">Amino-acid biosynthesis</keyword>
<keyword id="KW-0055">Arginine biosynthesis</keyword>
<keyword id="KW-0963">Cytoplasm</keyword>
<keyword id="KW-0238">DNA-binding</keyword>
<keyword id="KW-0678">Repressor</keyword>
<keyword id="KW-0804">Transcription</keyword>
<keyword id="KW-0805">Transcription regulation</keyword>
<protein>
    <recommendedName>
        <fullName evidence="1">Arginine repressor</fullName>
    </recommendedName>
</protein>
<gene>
    <name evidence="1" type="primary">argR</name>
    <name type="ordered locus">Sbal195_3810</name>
</gene>
<reference key="1">
    <citation type="submission" date="2007-11" db="EMBL/GenBank/DDBJ databases">
        <title>Complete sequence of chromosome of Shewanella baltica OS195.</title>
        <authorList>
            <consortium name="US DOE Joint Genome Institute"/>
            <person name="Copeland A."/>
            <person name="Lucas S."/>
            <person name="Lapidus A."/>
            <person name="Barry K."/>
            <person name="Glavina del Rio T."/>
            <person name="Dalin E."/>
            <person name="Tice H."/>
            <person name="Pitluck S."/>
            <person name="Chain P."/>
            <person name="Malfatti S."/>
            <person name="Shin M."/>
            <person name="Vergez L."/>
            <person name="Schmutz J."/>
            <person name="Larimer F."/>
            <person name="Land M."/>
            <person name="Hauser L."/>
            <person name="Kyrpides N."/>
            <person name="Kim E."/>
            <person name="Brettar I."/>
            <person name="Rodrigues J."/>
            <person name="Konstantinidis K."/>
            <person name="Klappenbach J."/>
            <person name="Hofle M."/>
            <person name="Tiedje J."/>
            <person name="Richardson P."/>
        </authorList>
    </citation>
    <scope>NUCLEOTIDE SEQUENCE [LARGE SCALE GENOMIC DNA]</scope>
    <source>
        <strain>OS195</strain>
    </source>
</reference>
<sequence length="156" mass="16955">MQTTKNQDDLVRIFKSILKEERFGSQSEIVTALQAEGFGNINQSKVSRMLSKFGAVRTRNAKQEMVYCLPAELGVPTAGSPLKNLVLDVDHNQAMIVVRTSPGAAQLIARLLDSIGKPEGILGTIAGDDTIFICPSSIQDIADTLETIKSLFNYAE</sequence>
<name>ARGR_SHEB9</name>